<comment type="catalytic activity">
    <reaction evidence="2">
        <text>GTP + H2O = 7,8-dihydroneopterin 3'-triphosphate + formate + H(+)</text>
        <dbReference type="Rhea" id="RHEA:17473"/>
        <dbReference type="ChEBI" id="CHEBI:15377"/>
        <dbReference type="ChEBI" id="CHEBI:15378"/>
        <dbReference type="ChEBI" id="CHEBI:15740"/>
        <dbReference type="ChEBI" id="CHEBI:37565"/>
        <dbReference type="ChEBI" id="CHEBI:58462"/>
        <dbReference type="EC" id="3.5.4.16"/>
    </reaction>
</comment>
<comment type="pathway">
    <text evidence="2">Cofactor biosynthesis; 7,8-dihydroneopterin triphosphate biosynthesis; 7,8-dihydroneopterin triphosphate from GTP: step 1/1.</text>
</comment>
<comment type="subunit">
    <text evidence="1">Toroid-shaped homodecamer, composed of two pentamers of five dimers.</text>
</comment>
<comment type="similarity">
    <text evidence="2">Belongs to the GTP cyclohydrolase I family.</text>
</comment>
<organism>
    <name type="scientific">Mycobacterium tuberculosis (strain ATCC 25177 / H37Ra)</name>
    <dbReference type="NCBI Taxonomy" id="419947"/>
    <lineage>
        <taxon>Bacteria</taxon>
        <taxon>Bacillati</taxon>
        <taxon>Actinomycetota</taxon>
        <taxon>Actinomycetes</taxon>
        <taxon>Mycobacteriales</taxon>
        <taxon>Mycobacteriaceae</taxon>
        <taxon>Mycobacterium</taxon>
        <taxon>Mycobacterium tuberculosis complex</taxon>
    </lineage>
</organism>
<keyword id="KW-0342">GTP-binding</keyword>
<keyword id="KW-0378">Hydrolase</keyword>
<keyword id="KW-0479">Metal-binding</keyword>
<keyword id="KW-0547">Nucleotide-binding</keyword>
<keyword id="KW-0554">One-carbon metabolism</keyword>
<keyword id="KW-1185">Reference proteome</keyword>
<keyword id="KW-0862">Zinc</keyword>
<sequence length="202" mass="22395">MSQLDSRSASARIRVFDQQRAEAAVRELLYAIGEDPDRDGLVATPSRVARSYREMFAGLYTDPDSVLNTMFDEDHDELVLVKEIPMYSTCEHHLVAFHGVAHVGYIPGDDGRVTGLSKIARLVDLYAKRPQVQERLTSQIADALMKKLDPRGVIVVIEAEHLCMAMRGVRKPGSVTTTSAVRGLFKTNAASRAEALDLILRK</sequence>
<evidence type="ECO:0000250" key="1"/>
<evidence type="ECO:0000255" key="2">
    <source>
        <dbReference type="HAMAP-Rule" id="MF_00223"/>
    </source>
</evidence>
<gene>
    <name evidence="2" type="primary">folE</name>
    <name type="ordered locus">MRA_3648</name>
</gene>
<feature type="chain" id="PRO_1000043711" description="GTP cyclohydrolase 1">
    <location>
        <begin position="1"/>
        <end position="202"/>
    </location>
</feature>
<feature type="binding site" evidence="2">
    <location>
        <position position="90"/>
    </location>
    <ligand>
        <name>Zn(2+)</name>
        <dbReference type="ChEBI" id="CHEBI:29105"/>
    </ligand>
</feature>
<feature type="binding site" evidence="2">
    <location>
        <position position="93"/>
    </location>
    <ligand>
        <name>Zn(2+)</name>
        <dbReference type="ChEBI" id="CHEBI:29105"/>
    </ligand>
</feature>
<feature type="binding site" evidence="2">
    <location>
        <position position="163"/>
    </location>
    <ligand>
        <name>Zn(2+)</name>
        <dbReference type="ChEBI" id="CHEBI:29105"/>
    </ligand>
</feature>
<protein>
    <recommendedName>
        <fullName evidence="2">GTP cyclohydrolase 1</fullName>
        <ecNumber evidence="2">3.5.4.16</ecNumber>
    </recommendedName>
    <alternativeName>
        <fullName evidence="2">GTP cyclohydrolase I</fullName>
        <shortName evidence="2">GTP-CH-I</shortName>
    </alternativeName>
</protein>
<name>GCH1_MYCTA</name>
<dbReference type="EC" id="3.5.4.16" evidence="2"/>
<dbReference type="EMBL" id="CP000611">
    <property type="protein sequence ID" value="ABQ75434.1"/>
    <property type="molecule type" value="Genomic_DNA"/>
</dbReference>
<dbReference type="RefSeq" id="WP_003899597.1">
    <property type="nucleotide sequence ID" value="NZ_CP016972.1"/>
</dbReference>
<dbReference type="SMR" id="A5U8T4"/>
<dbReference type="GeneID" id="45427595"/>
<dbReference type="KEGG" id="mra:MRA_3648"/>
<dbReference type="eggNOG" id="COG0302">
    <property type="taxonomic scope" value="Bacteria"/>
</dbReference>
<dbReference type="HOGENOM" id="CLU_049768_3_3_11"/>
<dbReference type="UniPathway" id="UPA00848">
    <property type="reaction ID" value="UER00151"/>
</dbReference>
<dbReference type="Proteomes" id="UP000001988">
    <property type="component" value="Chromosome"/>
</dbReference>
<dbReference type="GO" id="GO:0005737">
    <property type="term" value="C:cytoplasm"/>
    <property type="evidence" value="ECO:0007669"/>
    <property type="project" value="TreeGrafter"/>
</dbReference>
<dbReference type="GO" id="GO:0005525">
    <property type="term" value="F:GTP binding"/>
    <property type="evidence" value="ECO:0007669"/>
    <property type="project" value="UniProtKB-KW"/>
</dbReference>
<dbReference type="GO" id="GO:0003934">
    <property type="term" value="F:GTP cyclohydrolase I activity"/>
    <property type="evidence" value="ECO:0007669"/>
    <property type="project" value="UniProtKB-UniRule"/>
</dbReference>
<dbReference type="GO" id="GO:0008270">
    <property type="term" value="F:zinc ion binding"/>
    <property type="evidence" value="ECO:0007669"/>
    <property type="project" value="UniProtKB-UniRule"/>
</dbReference>
<dbReference type="GO" id="GO:0006730">
    <property type="term" value="P:one-carbon metabolic process"/>
    <property type="evidence" value="ECO:0007669"/>
    <property type="project" value="UniProtKB-UniRule"/>
</dbReference>
<dbReference type="GO" id="GO:0006729">
    <property type="term" value="P:tetrahydrobiopterin biosynthetic process"/>
    <property type="evidence" value="ECO:0007669"/>
    <property type="project" value="TreeGrafter"/>
</dbReference>
<dbReference type="GO" id="GO:0046654">
    <property type="term" value="P:tetrahydrofolate biosynthetic process"/>
    <property type="evidence" value="ECO:0007669"/>
    <property type="project" value="UniProtKB-UniRule"/>
</dbReference>
<dbReference type="FunFam" id="1.10.286.10:FF:000001">
    <property type="entry name" value="GTP cyclohydrolase 1"/>
    <property type="match status" value="1"/>
</dbReference>
<dbReference type="FunFam" id="3.30.1130.10:FF:000001">
    <property type="entry name" value="GTP cyclohydrolase 1"/>
    <property type="match status" value="1"/>
</dbReference>
<dbReference type="Gene3D" id="1.10.286.10">
    <property type="match status" value="1"/>
</dbReference>
<dbReference type="Gene3D" id="3.30.1130.10">
    <property type="match status" value="1"/>
</dbReference>
<dbReference type="HAMAP" id="MF_00223">
    <property type="entry name" value="FolE"/>
    <property type="match status" value="1"/>
</dbReference>
<dbReference type="InterPro" id="IPR043133">
    <property type="entry name" value="GTP-CH-I_C/QueF"/>
</dbReference>
<dbReference type="InterPro" id="IPR043134">
    <property type="entry name" value="GTP-CH-I_N"/>
</dbReference>
<dbReference type="InterPro" id="IPR001474">
    <property type="entry name" value="GTP_CycHdrlase_I"/>
</dbReference>
<dbReference type="InterPro" id="IPR018234">
    <property type="entry name" value="GTP_CycHdrlase_I_CS"/>
</dbReference>
<dbReference type="InterPro" id="IPR020602">
    <property type="entry name" value="GTP_CycHdrlase_I_dom"/>
</dbReference>
<dbReference type="NCBIfam" id="TIGR00063">
    <property type="entry name" value="folE"/>
    <property type="match status" value="1"/>
</dbReference>
<dbReference type="NCBIfam" id="NF006825">
    <property type="entry name" value="PRK09347.1-2"/>
    <property type="match status" value="1"/>
</dbReference>
<dbReference type="NCBIfam" id="NF006826">
    <property type="entry name" value="PRK09347.1-3"/>
    <property type="match status" value="1"/>
</dbReference>
<dbReference type="PANTHER" id="PTHR11109:SF7">
    <property type="entry name" value="GTP CYCLOHYDROLASE 1"/>
    <property type="match status" value="1"/>
</dbReference>
<dbReference type="PANTHER" id="PTHR11109">
    <property type="entry name" value="GTP CYCLOHYDROLASE I"/>
    <property type="match status" value="1"/>
</dbReference>
<dbReference type="Pfam" id="PF01227">
    <property type="entry name" value="GTP_cyclohydroI"/>
    <property type="match status" value="1"/>
</dbReference>
<dbReference type="SUPFAM" id="SSF55620">
    <property type="entry name" value="Tetrahydrobiopterin biosynthesis enzymes-like"/>
    <property type="match status" value="1"/>
</dbReference>
<dbReference type="PROSITE" id="PS00859">
    <property type="entry name" value="GTP_CYCLOHYDROL_1_1"/>
    <property type="match status" value="1"/>
</dbReference>
<dbReference type="PROSITE" id="PS00860">
    <property type="entry name" value="GTP_CYCLOHYDROL_1_2"/>
    <property type="match status" value="1"/>
</dbReference>
<reference key="1">
    <citation type="journal article" date="2008" name="PLoS ONE">
        <title>Genetic basis of virulence attenuation revealed by comparative genomic analysis of Mycobacterium tuberculosis strain H37Ra versus H37Rv.</title>
        <authorList>
            <person name="Zheng H."/>
            <person name="Lu L."/>
            <person name="Wang B."/>
            <person name="Pu S."/>
            <person name="Zhang X."/>
            <person name="Zhu G."/>
            <person name="Shi W."/>
            <person name="Zhang L."/>
            <person name="Wang H."/>
            <person name="Wang S."/>
            <person name="Zhao G."/>
            <person name="Zhang Y."/>
        </authorList>
    </citation>
    <scope>NUCLEOTIDE SEQUENCE [LARGE SCALE GENOMIC DNA]</scope>
    <source>
        <strain>ATCC 25177 / H37Ra</strain>
    </source>
</reference>
<accession>A5U8T4</accession>
<proteinExistence type="inferred from homology"/>